<feature type="chain" id="PRO_0000408112" description="U3 small nucleolar RNA-associated protein 25">
    <location>
        <begin position="1"/>
        <end position="723"/>
    </location>
</feature>
<feature type="region of interest" description="Disordered" evidence="2">
    <location>
        <begin position="1"/>
        <end position="175"/>
    </location>
</feature>
<feature type="compositionally biased region" description="Gly residues" evidence="2">
    <location>
        <begin position="1"/>
        <end position="26"/>
    </location>
</feature>
<feature type="compositionally biased region" description="Basic residues" evidence="2">
    <location>
        <begin position="27"/>
        <end position="37"/>
    </location>
</feature>
<feature type="compositionally biased region" description="Basic and acidic residues" evidence="2">
    <location>
        <begin position="47"/>
        <end position="59"/>
    </location>
</feature>
<feature type="compositionally biased region" description="Acidic residues" evidence="2">
    <location>
        <begin position="60"/>
        <end position="89"/>
    </location>
</feature>
<feature type="compositionally biased region" description="Acidic residues" evidence="2">
    <location>
        <begin position="136"/>
        <end position="161"/>
    </location>
</feature>
<proteinExistence type="inferred from homology"/>
<reference key="1">
    <citation type="journal article" date="2015" name="Genome Announc.">
        <title>Draft genome sequence of the cellulolytic fungus Chaetomium globosum.</title>
        <authorList>
            <person name="Cuomo C.A."/>
            <person name="Untereiner W.A."/>
            <person name="Ma L.-J."/>
            <person name="Grabherr M."/>
            <person name="Birren B.W."/>
        </authorList>
    </citation>
    <scope>NUCLEOTIDE SEQUENCE [LARGE SCALE GENOMIC DNA]</scope>
    <source>
        <strain>ATCC 6205 / CBS 148.51 / DSM 1962 / NBRC 6347 / NRRL 1970</strain>
    </source>
</reference>
<gene>
    <name type="primary">UTP25</name>
    <name type="ORF">CHGG_00663</name>
</gene>
<sequence length="723" mass="81629">MAPGGRAGFRGGSSRGGPSRGGTRGRGSSRGRGRGRGRAVAQQPRGARFDDKRLASKDESESEAGSESPSDDESDAMEVDSNEEDEEETQSAQPYLSLMRSLVESAPKAKRRKLDHASAERQGPESTKPEAAPEATDGEEDGDEDGEERDVDFVEEPEEDPTNAAPEDLFDEDDDLDVSDPFEVHFADPKEEVLRPRLEAIQGNKWRMERIAANSTRVFFNTPDAGDAAAKPLPAPISGISDLKLKKRLQEAMAPKHAKFDQVEQTIAPLLFNYQDMLYCNRTVAGSQGIRRMASLHALNHVFKADGNEDLELRDQGFTRPKVLMLLPTRQSCVKMVDMIVSICEPDQQENRKRFEDGYIDKQSKFSDDKPDDFKDLFSGSDDDMFRLGMKFTRKTIKYFSQFYNSDIIFASPLGLRMAIGSEEEKKLDFDFLSSIELVIVDQADALLMQNWEHVEFIFEHLNVQPKDAHGCDFSRVRSWYLDDQAKHFRQTVIFSAFNTPELVELLRTHCHNWAGKARLQQESAGTIQHLPVKARQTFSRFEAGSIAADPDARFAYFTKAIVPMLARHRGRDAAGTLVFIPSYLDFVRVRNYFANNPAVENVSFGTISEYADVPEASRARSHFLNGRHKVLLYTERAHHFRRYQIKGVKRVVMYALPDNPLFYQEIAGGYLQKSEQSLLVEHGQGVVRVMFSKYDVMKLERIVGTSRVGKMIHDQGDTFDFV</sequence>
<name>UTP25_CHAGB</name>
<accession>Q2HGJ1</accession>
<protein>
    <recommendedName>
        <fullName>U3 small nucleolar RNA-associated protein 25</fullName>
        <shortName>U3 snoRNA-associated protein 25</shortName>
    </recommendedName>
    <alternativeName>
        <fullName>U three protein 25</fullName>
    </alternativeName>
</protein>
<comment type="function">
    <text evidence="1">DEAD-box RNA helicase-like protein required for pre-18S rRNA processing, specifically at sites A0, A1, and A2.</text>
</comment>
<comment type="subunit">
    <text evidence="1">Component of the ribosomal small subunit (SSU) processome composed of at least 40 protein subunits and snoRNA U3.</text>
</comment>
<comment type="subcellular location">
    <subcellularLocation>
        <location evidence="1">Nucleus</location>
        <location evidence="1">Nucleolus</location>
    </subcellularLocation>
</comment>
<comment type="similarity">
    <text evidence="3">Belongs to the UTP25 family.</text>
</comment>
<evidence type="ECO:0000250" key="1"/>
<evidence type="ECO:0000256" key="2">
    <source>
        <dbReference type="SAM" id="MobiDB-lite"/>
    </source>
</evidence>
<evidence type="ECO:0000305" key="3"/>
<dbReference type="EMBL" id="CH408029">
    <property type="protein sequence ID" value="EAQ92428.1"/>
    <property type="molecule type" value="Genomic_DNA"/>
</dbReference>
<dbReference type="RefSeq" id="XP_001219884.1">
    <property type="nucleotide sequence ID" value="XM_001219883.1"/>
</dbReference>
<dbReference type="FunCoup" id="Q2HGJ1">
    <property type="interactions" value="1099"/>
</dbReference>
<dbReference type="STRING" id="306901.Q2HGJ1"/>
<dbReference type="GeneID" id="4386694"/>
<dbReference type="VEuPathDB" id="FungiDB:CHGG_00663"/>
<dbReference type="eggNOG" id="KOG2340">
    <property type="taxonomic scope" value="Eukaryota"/>
</dbReference>
<dbReference type="HOGENOM" id="CLU_018705_0_1_1"/>
<dbReference type="InParanoid" id="Q2HGJ1"/>
<dbReference type="OMA" id="QDRGDTF"/>
<dbReference type="OrthoDB" id="10264378at2759"/>
<dbReference type="Proteomes" id="UP000001056">
    <property type="component" value="Unassembled WGS sequence"/>
</dbReference>
<dbReference type="GO" id="GO:0005730">
    <property type="term" value="C:nucleolus"/>
    <property type="evidence" value="ECO:0007669"/>
    <property type="project" value="UniProtKB-SubCell"/>
</dbReference>
<dbReference type="GO" id="GO:0032040">
    <property type="term" value="C:small-subunit processome"/>
    <property type="evidence" value="ECO:0007669"/>
    <property type="project" value="EnsemblFungi"/>
</dbReference>
<dbReference type="GO" id="GO:0019843">
    <property type="term" value="F:rRNA binding"/>
    <property type="evidence" value="ECO:0007669"/>
    <property type="project" value="EnsemblFungi"/>
</dbReference>
<dbReference type="GO" id="GO:0034511">
    <property type="term" value="F:U3 snoRNA binding"/>
    <property type="evidence" value="ECO:0007669"/>
    <property type="project" value="EnsemblFungi"/>
</dbReference>
<dbReference type="GO" id="GO:0000462">
    <property type="term" value="P:maturation of SSU-rRNA from tricistronic rRNA transcript (SSU-rRNA, 5.8S rRNA, LSU-rRNA)"/>
    <property type="evidence" value="ECO:0007669"/>
    <property type="project" value="EnsemblFungi"/>
</dbReference>
<dbReference type="FunFam" id="3.40.50.300:FF:002356">
    <property type="entry name" value="U3 small nucleolar RNA-associated protein 25"/>
    <property type="match status" value="1"/>
</dbReference>
<dbReference type="Gene3D" id="3.40.50.300">
    <property type="entry name" value="P-loop containing nucleotide triphosphate hydrolases"/>
    <property type="match status" value="1"/>
</dbReference>
<dbReference type="InterPro" id="IPR027417">
    <property type="entry name" value="P-loop_NTPase"/>
</dbReference>
<dbReference type="InterPro" id="IPR010678">
    <property type="entry name" value="UTP25"/>
</dbReference>
<dbReference type="InterPro" id="IPR053939">
    <property type="entry name" value="UTP25_C"/>
</dbReference>
<dbReference type="InterPro" id="IPR053940">
    <property type="entry name" value="UTP25_NTPase-like"/>
</dbReference>
<dbReference type="PANTHER" id="PTHR12933">
    <property type="entry name" value="ORF PROTEIN-RELATED"/>
    <property type="match status" value="1"/>
</dbReference>
<dbReference type="PANTHER" id="PTHR12933:SF0">
    <property type="entry name" value="U3 SMALL NUCLEOLAR RNA-ASSOCIATED PROTEIN 25 HOMOLOG"/>
    <property type="match status" value="1"/>
</dbReference>
<dbReference type="Pfam" id="PF06862">
    <property type="entry name" value="Utp25_C"/>
    <property type="match status" value="1"/>
</dbReference>
<dbReference type="Pfam" id="PF22916">
    <property type="entry name" value="UTP25_NTPase-like"/>
    <property type="match status" value="1"/>
</dbReference>
<dbReference type="SUPFAM" id="SSF52540">
    <property type="entry name" value="P-loop containing nucleoside triphosphate hydrolases"/>
    <property type="match status" value="1"/>
</dbReference>
<keyword id="KW-0539">Nucleus</keyword>
<keyword id="KW-1185">Reference proteome</keyword>
<keyword id="KW-0687">Ribonucleoprotein</keyword>
<keyword id="KW-0690">Ribosome biogenesis</keyword>
<keyword id="KW-0698">rRNA processing</keyword>
<organism>
    <name type="scientific">Chaetomium globosum (strain ATCC 6205 / CBS 148.51 / DSM 1962 / NBRC 6347 / NRRL 1970)</name>
    <name type="common">Soil fungus</name>
    <dbReference type="NCBI Taxonomy" id="306901"/>
    <lineage>
        <taxon>Eukaryota</taxon>
        <taxon>Fungi</taxon>
        <taxon>Dikarya</taxon>
        <taxon>Ascomycota</taxon>
        <taxon>Pezizomycotina</taxon>
        <taxon>Sordariomycetes</taxon>
        <taxon>Sordariomycetidae</taxon>
        <taxon>Sordariales</taxon>
        <taxon>Chaetomiaceae</taxon>
        <taxon>Chaetomium</taxon>
    </lineage>
</organism>